<comment type="function">
    <text evidence="1">One of the primary rRNA binding proteins, it binds directly to 16S rRNA where it helps nucleate assembly of the platform of the 30S subunit by binding and bridging several RNA helices of the 16S rRNA.</text>
</comment>
<comment type="function">
    <text evidence="1">Forms an intersubunit bridge (bridge B4) with the 23S rRNA of the 50S subunit in the ribosome.</text>
</comment>
<comment type="subunit">
    <text evidence="1">Part of the 30S ribosomal subunit. Forms a bridge to the 50S subunit in the 70S ribosome, contacting the 23S rRNA.</text>
</comment>
<comment type="similarity">
    <text evidence="1">Belongs to the universal ribosomal protein uS15 family.</text>
</comment>
<dbReference type="EMBL" id="CP000937">
    <property type="protein sequence ID" value="ABZ86449.1"/>
    <property type="molecule type" value="Genomic_DNA"/>
</dbReference>
<dbReference type="SMR" id="B0TZ10"/>
<dbReference type="KEGG" id="fph:Fphi_0233"/>
<dbReference type="eggNOG" id="COG0184">
    <property type="taxonomic scope" value="Bacteria"/>
</dbReference>
<dbReference type="HOGENOM" id="CLU_148518_0_0_6"/>
<dbReference type="GO" id="GO:0022627">
    <property type="term" value="C:cytosolic small ribosomal subunit"/>
    <property type="evidence" value="ECO:0007669"/>
    <property type="project" value="TreeGrafter"/>
</dbReference>
<dbReference type="GO" id="GO:0019843">
    <property type="term" value="F:rRNA binding"/>
    <property type="evidence" value="ECO:0007669"/>
    <property type="project" value="UniProtKB-UniRule"/>
</dbReference>
<dbReference type="GO" id="GO:0003735">
    <property type="term" value="F:structural constituent of ribosome"/>
    <property type="evidence" value="ECO:0007669"/>
    <property type="project" value="InterPro"/>
</dbReference>
<dbReference type="GO" id="GO:0006412">
    <property type="term" value="P:translation"/>
    <property type="evidence" value="ECO:0007669"/>
    <property type="project" value="UniProtKB-UniRule"/>
</dbReference>
<dbReference type="CDD" id="cd00353">
    <property type="entry name" value="Ribosomal_S15p_S13e"/>
    <property type="match status" value="1"/>
</dbReference>
<dbReference type="FunFam" id="1.10.287.10:FF:000002">
    <property type="entry name" value="30S ribosomal protein S15"/>
    <property type="match status" value="1"/>
</dbReference>
<dbReference type="Gene3D" id="6.10.250.3130">
    <property type="match status" value="1"/>
</dbReference>
<dbReference type="Gene3D" id="1.10.287.10">
    <property type="entry name" value="S15/NS1, RNA-binding"/>
    <property type="match status" value="1"/>
</dbReference>
<dbReference type="HAMAP" id="MF_01343_B">
    <property type="entry name" value="Ribosomal_uS15_B"/>
    <property type="match status" value="1"/>
</dbReference>
<dbReference type="InterPro" id="IPR000589">
    <property type="entry name" value="Ribosomal_uS15"/>
</dbReference>
<dbReference type="InterPro" id="IPR005290">
    <property type="entry name" value="Ribosomal_uS15_bac-type"/>
</dbReference>
<dbReference type="InterPro" id="IPR009068">
    <property type="entry name" value="uS15_NS1_RNA-bd_sf"/>
</dbReference>
<dbReference type="NCBIfam" id="TIGR00952">
    <property type="entry name" value="S15_bact"/>
    <property type="match status" value="1"/>
</dbReference>
<dbReference type="PANTHER" id="PTHR23321">
    <property type="entry name" value="RIBOSOMAL PROTEIN S15, BACTERIAL AND ORGANELLAR"/>
    <property type="match status" value="1"/>
</dbReference>
<dbReference type="PANTHER" id="PTHR23321:SF26">
    <property type="entry name" value="SMALL RIBOSOMAL SUBUNIT PROTEIN US15M"/>
    <property type="match status" value="1"/>
</dbReference>
<dbReference type="Pfam" id="PF00312">
    <property type="entry name" value="Ribosomal_S15"/>
    <property type="match status" value="1"/>
</dbReference>
<dbReference type="SMART" id="SM01387">
    <property type="entry name" value="Ribosomal_S15"/>
    <property type="match status" value="1"/>
</dbReference>
<dbReference type="SUPFAM" id="SSF47060">
    <property type="entry name" value="S15/NS1 RNA-binding domain"/>
    <property type="match status" value="1"/>
</dbReference>
<dbReference type="PROSITE" id="PS00362">
    <property type="entry name" value="RIBOSOMAL_S15"/>
    <property type="match status" value="1"/>
</dbReference>
<name>RS15_FRAP2</name>
<gene>
    <name evidence="1" type="primary">rpsO</name>
    <name type="ordered locus">Fphi_0233</name>
</gene>
<reference key="1">
    <citation type="submission" date="2007-12" db="EMBL/GenBank/DDBJ databases">
        <title>Complete sequence of chromosome of Francisella philomiragia subsp. philomiragia ATCC 25017.</title>
        <authorList>
            <consortium name="US DOE Joint Genome Institute"/>
            <person name="Copeland A."/>
            <person name="Lucas S."/>
            <person name="Lapidus A."/>
            <person name="Barry K."/>
            <person name="Detter J.C."/>
            <person name="Glavina del Rio T."/>
            <person name="Hammon N."/>
            <person name="Israni S."/>
            <person name="Dalin E."/>
            <person name="Tice H."/>
            <person name="Pitluck S."/>
            <person name="Chain P."/>
            <person name="Malfatti S."/>
            <person name="Shin M."/>
            <person name="Vergez L."/>
            <person name="Schmutz J."/>
            <person name="Larimer F."/>
            <person name="Land M."/>
            <person name="Hauser L."/>
            <person name="Richardson P."/>
        </authorList>
    </citation>
    <scope>NUCLEOTIDE SEQUENCE [LARGE SCALE GENOMIC DNA]</scope>
    <source>
        <strain>ATCC 25017 / CCUG 19701 / FSC 153 / O#319-036</strain>
    </source>
</reference>
<feature type="chain" id="PRO_1000086802" description="Small ribosomal subunit protein uS15">
    <location>
        <begin position="1"/>
        <end position="88"/>
    </location>
</feature>
<feature type="region of interest" description="Disordered" evidence="2">
    <location>
        <begin position="1"/>
        <end position="24"/>
    </location>
</feature>
<feature type="compositionally biased region" description="Polar residues" evidence="2">
    <location>
        <begin position="1"/>
        <end position="20"/>
    </location>
</feature>
<accession>B0TZ10</accession>
<evidence type="ECO:0000255" key="1">
    <source>
        <dbReference type="HAMAP-Rule" id="MF_01343"/>
    </source>
</evidence>
<evidence type="ECO:0000256" key="2">
    <source>
        <dbReference type="SAM" id="MobiDB-lite"/>
    </source>
</evidence>
<evidence type="ECO:0000305" key="3"/>
<organism>
    <name type="scientific">Francisella philomiragia subsp. philomiragia (strain ATCC 25017 / CCUG 19701 / FSC 153 / O#319-036)</name>
    <dbReference type="NCBI Taxonomy" id="484022"/>
    <lineage>
        <taxon>Bacteria</taxon>
        <taxon>Pseudomonadati</taxon>
        <taxon>Pseudomonadota</taxon>
        <taxon>Gammaproteobacteria</taxon>
        <taxon>Thiotrichales</taxon>
        <taxon>Francisellaceae</taxon>
        <taxon>Francisella</taxon>
    </lineage>
</organism>
<proteinExistence type="inferred from homology"/>
<keyword id="KW-0687">Ribonucleoprotein</keyword>
<keyword id="KW-0689">Ribosomal protein</keyword>
<keyword id="KW-0694">RNA-binding</keyword>
<keyword id="KW-0699">rRNA-binding</keyword>
<protein>
    <recommendedName>
        <fullName evidence="1">Small ribosomal subunit protein uS15</fullName>
    </recommendedName>
    <alternativeName>
        <fullName evidence="3">30S ribosomal protein S15</fullName>
    </alternativeName>
</protein>
<sequence length="88" mass="10274">MLTTQDKQNIIKENQQSEGDTGSPEVQVALLTARINDLQGHFATHKKDNHSRRGLLRLVSQRRKLLDYLHGKDVERYRALIKKLNLRR</sequence>